<name>SOMA_MONDO</name>
<evidence type="ECO:0000250" key="1"/>
<evidence type="ECO:0000250" key="2">
    <source>
        <dbReference type="UniProtKB" id="P01241"/>
    </source>
</evidence>
<evidence type="ECO:0000305" key="3"/>
<proteinExistence type="evidence at transcript level"/>
<sequence>MAPGMRVCLLLLIAFTLLGPQRAAAFPAMPLSSLFANAVLRAQHLHQLVADTYKEFERTYIPEAQRHSIQSTQTAFCFSETIPAPTGKDEAQQRSDVELLRFSLLLIQSWLSPVQFLSRVFTNSLVFGTSDRVYEKLRDLEEGIQALMQELEDGSSRGGLVLKTTYDKFDTNLRSDEALLKNYGLLSCFKKDLHKAETYLRVMECRRFVESSCAF</sequence>
<accession>Q9GL60</accession>
<gene>
    <name type="primary">GH1</name>
</gene>
<protein>
    <recommendedName>
        <fullName>Somatotropin</fullName>
    </recommendedName>
    <alternativeName>
        <fullName>Growth hormone</fullName>
    </alternativeName>
</protein>
<keyword id="KW-0372">Hormone</keyword>
<keyword id="KW-0479">Metal-binding</keyword>
<keyword id="KW-0597">Phosphoprotein</keyword>
<keyword id="KW-1185">Reference proteome</keyword>
<keyword id="KW-0964">Secreted</keyword>
<keyword id="KW-0732">Signal</keyword>
<keyword id="KW-0862">Zinc</keyword>
<dbReference type="EMBL" id="AF312023">
    <property type="protein sequence ID" value="AAG27732.1"/>
    <property type="molecule type" value="mRNA"/>
</dbReference>
<dbReference type="RefSeq" id="NP_001028165.1">
    <property type="nucleotide sequence ID" value="NM_001032993.1"/>
</dbReference>
<dbReference type="SMR" id="Q9GL60"/>
<dbReference type="FunCoup" id="Q9GL60">
    <property type="interactions" value="96"/>
</dbReference>
<dbReference type="STRING" id="13616.ENSMODP00000012310"/>
<dbReference type="GeneID" id="554243"/>
<dbReference type="KEGG" id="mdo:554243"/>
<dbReference type="CTD" id="2688"/>
<dbReference type="eggNOG" id="ENOG502R5GJ">
    <property type="taxonomic scope" value="Eukaryota"/>
</dbReference>
<dbReference type="InParanoid" id="Q9GL60"/>
<dbReference type="OrthoDB" id="9925773at2759"/>
<dbReference type="Proteomes" id="UP000002280">
    <property type="component" value="Unplaced"/>
</dbReference>
<dbReference type="GO" id="GO:0005615">
    <property type="term" value="C:extracellular space"/>
    <property type="evidence" value="ECO:0000318"/>
    <property type="project" value="GO_Central"/>
</dbReference>
<dbReference type="GO" id="GO:0008083">
    <property type="term" value="F:growth factor activity"/>
    <property type="evidence" value="ECO:0000318"/>
    <property type="project" value="GO_Central"/>
</dbReference>
<dbReference type="GO" id="GO:0005131">
    <property type="term" value="F:growth hormone receptor binding"/>
    <property type="evidence" value="ECO:0000318"/>
    <property type="project" value="GO_Central"/>
</dbReference>
<dbReference type="GO" id="GO:0005179">
    <property type="term" value="F:hormone activity"/>
    <property type="evidence" value="ECO:0000318"/>
    <property type="project" value="GO_Central"/>
</dbReference>
<dbReference type="GO" id="GO:0046872">
    <property type="term" value="F:metal ion binding"/>
    <property type="evidence" value="ECO:0007669"/>
    <property type="project" value="UniProtKB-KW"/>
</dbReference>
<dbReference type="GO" id="GO:0048513">
    <property type="term" value="P:animal organ development"/>
    <property type="evidence" value="ECO:0000318"/>
    <property type="project" value="GO_Central"/>
</dbReference>
<dbReference type="GO" id="GO:0060396">
    <property type="term" value="P:growth hormone receptor signaling pathway"/>
    <property type="evidence" value="ECO:0000318"/>
    <property type="project" value="GO_Central"/>
</dbReference>
<dbReference type="GO" id="GO:0046427">
    <property type="term" value="P:positive regulation of receptor signaling pathway via JAK-STAT"/>
    <property type="evidence" value="ECO:0000318"/>
    <property type="project" value="GO_Central"/>
</dbReference>
<dbReference type="GO" id="GO:0031667">
    <property type="term" value="P:response to nutrient levels"/>
    <property type="evidence" value="ECO:0000318"/>
    <property type="project" value="GO_Central"/>
</dbReference>
<dbReference type="CDD" id="cd10285">
    <property type="entry name" value="somatotropin_like"/>
    <property type="match status" value="1"/>
</dbReference>
<dbReference type="FunFam" id="1.20.1250.10:FF:000002">
    <property type="entry name" value="Growth hormone"/>
    <property type="match status" value="1"/>
</dbReference>
<dbReference type="Gene3D" id="1.20.1250.10">
    <property type="match status" value="1"/>
</dbReference>
<dbReference type="InterPro" id="IPR009079">
    <property type="entry name" value="4_helix_cytokine-like_core"/>
</dbReference>
<dbReference type="InterPro" id="IPR034975">
    <property type="entry name" value="Somatotropin"/>
</dbReference>
<dbReference type="InterPro" id="IPR001400">
    <property type="entry name" value="Somatotropin/Prolactin"/>
</dbReference>
<dbReference type="InterPro" id="IPR018116">
    <property type="entry name" value="Somatotropin_CS"/>
</dbReference>
<dbReference type="PANTHER" id="PTHR11417:SF2">
    <property type="entry name" value="SOMATOTROPIN"/>
    <property type="match status" value="1"/>
</dbReference>
<dbReference type="PANTHER" id="PTHR11417">
    <property type="entry name" value="SOMATOTROPIN,PROLACTIN"/>
    <property type="match status" value="1"/>
</dbReference>
<dbReference type="Pfam" id="PF00103">
    <property type="entry name" value="Hormone_1"/>
    <property type="match status" value="1"/>
</dbReference>
<dbReference type="PRINTS" id="PR00836">
    <property type="entry name" value="SOMATOTROPIN"/>
</dbReference>
<dbReference type="SUPFAM" id="SSF47266">
    <property type="entry name" value="4-helical cytokines"/>
    <property type="match status" value="1"/>
</dbReference>
<dbReference type="PROSITE" id="PS00266">
    <property type="entry name" value="SOMATOTROPIN_1"/>
    <property type="match status" value="1"/>
</dbReference>
<dbReference type="PROSITE" id="PS00338">
    <property type="entry name" value="SOMATOTROPIN_2"/>
    <property type="match status" value="1"/>
</dbReference>
<reference key="1">
    <citation type="submission" date="2000-10" db="EMBL/GenBank/DDBJ databases">
        <title>Cloning and characterization of pituitary growth hormone precursor cDNA from the marsupial, Monodelphis domestica.</title>
        <authorList>
            <person name="Kacsoh B."/>
        </authorList>
    </citation>
    <scope>NUCLEOTIDE SEQUENCE [MRNA]</scope>
    <source>
        <tissue>Pituitary</tissue>
    </source>
</reference>
<comment type="function">
    <text evidence="1">Plays an important role in growth control. Its major role in stimulating body growth is to stimulate the liver and other tissues to secrete IGF1. It stimulates both the differentiation and proliferation of myoblasts. It also stimulates amino acid uptake and protein synthesis in muscle and other tissues (By similarity).</text>
</comment>
<comment type="subcellular location">
    <subcellularLocation>
        <location>Secreted</location>
    </subcellularLocation>
</comment>
<comment type="similarity">
    <text evidence="3">Belongs to the somatotropin/prolactin family.</text>
</comment>
<feature type="signal peptide" evidence="1">
    <location>
        <begin position="1"/>
        <end position="25"/>
    </location>
</feature>
<feature type="chain" id="PRO_0000032991" description="Somatotropin">
    <location>
        <begin position="26"/>
        <end position="215"/>
    </location>
</feature>
<feature type="binding site" evidence="1">
    <location>
        <position position="44"/>
    </location>
    <ligand>
        <name>Zn(2+)</name>
        <dbReference type="ChEBI" id="CHEBI:29105"/>
    </ligand>
</feature>
<feature type="binding site" evidence="1">
    <location>
        <position position="197"/>
    </location>
    <ligand>
        <name>Zn(2+)</name>
        <dbReference type="ChEBI" id="CHEBI:29105"/>
    </ligand>
</feature>
<feature type="modified residue" description="Phosphoserine" evidence="2">
    <location>
        <position position="130"/>
    </location>
</feature>
<organism>
    <name type="scientific">Monodelphis domestica</name>
    <name type="common">Gray short-tailed opossum</name>
    <dbReference type="NCBI Taxonomy" id="13616"/>
    <lineage>
        <taxon>Eukaryota</taxon>
        <taxon>Metazoa</taxon>
        <taxon>Chordata</taxon>
        <taxon>Craniata</taxon>
        <taxon>Vertebrata</taxon>
        <taxon>Euteleostomi</taxon>
        <taxon>Mammalia</taxon>
        <taxon>Metatheria</taxon>
        <taxon>Didelphimorphia</taxon>
        <taxon>Didelphidae</taxon>
        <taxon>Monodelphis</taxon>
    </lineage>
</organism>